<evidence type="ECO:0000255" key="1">
    <source>
        <dbReference type="HAMAP-Rule" id="MF_01337"/>
    </source>
</evidence>
<evidence type="ECO:0000305" key="2"/>
<dbReference type="EMBL" id="CP001158">
    <property type="protein sequence ID" value="ACL30298.1"/>
    <property type="molecule type" value="Genomic_DNA"/>
</dbReference>
<dbReference type="RefSeq" id="WP_009874459.1">
    <property type="nucleotide sequence ID" value="NC_011834.1"/>
</dbReference>
<dbReference type="SMR" id="B8D833"/>
<dbReference type="KEGG" id="bau:BUAPTUC7_502"/>
<dbReference type="HOGENOM" id="CLU_098841_0_1_6"/>
<dbReference type="GO" id="GO:0022625">
    <property type="term" value="C:cytosolic large ribosomal subunit"/>
    <property type="evidence" value="ECO:0007669"/>
    <property type="project" value="TreeGrafter"/>
</dbReference>
<dbReference type="GO" id="GO:0008097">
    <property type="term" value="F:5S rRNA binding"/>
    <property type="evidence" value="ECO:0007669"/>
    <property type="project" value="TreeGrafter"/>
</dbReference>
<dbReference type="GO" id="GO:0003735">
    <property type="term" value="F:structural constituent of ribosome"/>
    <property type="evidence" value="ECO:0007669"/>
    <property type="project" value="InterPro"/>
</dbReference>
<dbReference type="GO" id="GO:0006412">
    <property type="term" value="P:translation"/>
    <property type="evidence" value="ECO:0007669"/>
    <property type="project" value="UniProtKB-UniRule"/>
</dbReference>
<dbReference type="CDD" id="cd00432">
    <property type="entry name" value="Ribosomal_L18_L5e"/>
    <property type="match status" value="1"/>
</dbReference>
<dbReference type="FunFam" id="3.30.420.100:FF:000001">
    <property type="entry name" value="50S ribosomal protein L18"/>
    <property type="match status" value="1"/>
</dbReference>
<dbReference type="Gene3D" id="3.30.420.100">
    <property type="match status" value="1"/>
</dbReference>
<dbReference type="HAMAP" id="MF_01337_B">
    <property type="entry name" value="Ribosomal_uL18_B"/>
    <property type="match status" value="1"/>
</dbReference>
<dbReference type="InterPro" id="IPR004389">
    <property type="entry name" value="Ribosomal_uL18_bac-type"/>
</dbReference>
<dbReference type="InterPro" id="IPR005484">
    <property type="entry name" value="Ribosomal_uL18_bac/euk"/>
</dbReference>
<dbReference type="NCBIfam" id="TIGR00060">
    <property type="entry name" value="L18_bact"/>
    <property type="match status" value="1"/>
</dbReference>
<dbReference type="PANTHER" id="PTHR12899">
    <property type="entry name" value="39S RIBOSOMAL PROTEIN L18, MITOCHONDRIAL"/>
    <property type="match status" value="1"/>
</dbReference>
<dbReference type="PANTHER" id="PTHR12899:SF3">
    <property type="entry name" value="LARGE RIBOSOMAL SUBUNIT PROTEIN UL18M"/>
    <property type="match status" value="1"/>
</dbReference>
<dbReference type="Pfam" id="PF00861">
    <property type="entry name" value="Ribosomal_L18p"/>
    <property type="match status" value="1"/>
</dbReference>
<dbReference type="SUPFAM" id="SSF53137">
    <property type="entry name" value="Translational machinery components"/>
    <property type="match status" value="1"/>
</dbReference>
<accession>B8D833</accession>
<feature type="chain" id="PRO_1000166214" description="Large ribosomal subunit protein uL18">
    <location>
        <begin position="1"/>
        <end position="122"/>
    </location>
</feature>
<proteinExistence type="inferred from homology"/>
<name>RL18_BUCAT</name>
<comment type="function">
    <text evidence="1">This is one of the proteins that bind and probably mediate the attachment of the 5S RNA into the large ribosomal subunit, where it forms part of the central protuberance.</text>
</comment>
<comment type="subunit">
    <text evidence="1">Part of the 50S ribosomal subunit; part of the 5S rRNA/L5/L18/L25 subcomplex. Contacts the 5S and 23S rRNAs.</text>
</comment>
<comment type="similarity">
    <text evidence="1">Belongs to the universal ribosomal protein uL18 family.</text>
</comment>
<protein>
    <recommendedName>
        <fullName evidence="1">Large ribosomal subunit protein uL18</fullName>
    </recommendedName>
    <alternativeName>
        <fullName evidence="2">50S ribosomal protein L18</fullName>
    </alternativeName>
</protein>
<sequence length="122" mass="13806">MIFSNKNKIISRIRRSMKTRCKIKKLGAIRLVVHRTSRHMYAQIISSKEAKVLVFASTLERKINCSLKYTGNKEAAAKIGKIIAERALSKGISHVSFDRSGFKYHGRVQVLAESAREVGLKF</sequence>
<keyword id="KW-0687">Ribonucleoprotein</keyword>
<keyword id="KW-0689">Ribosomal protein</keyword>
<keyword id="KW-0694">RNA-binding</keyword>
<keyword id="KW-0699">rRNA-binding</keyword>
<organism>
    <name type="scientific">Buchnera aphidicola subsp. Acyrthosiphon pisum (strain Tuc7)</name>
    <dbReference type="NCBI Taxonomy" id="561501"/>
    <lineage>
        <taxon>Bacteria</taxon>
        <taxon>Pseudomonadati</taxon>
        <taxon>Pseudomonadota</taxon>
        <taxon>Gammaproteobacteria</taxon>
        <taxon>Enterobacterales</taxon>
        <taxon>Erwiniaceae</taxon>
        <taxon>Buchnera</taxon>
    </lineage>
</organism>
<reference key="1">
    <citation type="journal article" date="2009" name="Science">
        <title>The dynamics and time scale of ongoing genomic erosion in symbiotic bacteria.</title>
        <authorList>
            <person name="Moran N.A."/>
            <person name="McLaughlin H.J."/>
            <person name="Sorek R."/>
        </authorList>
    </citation>
    <scope>NUCLEOTIDE SEQUENCE [LARGE SCALE GENOMIC DNA]</scope>
    <source>
        <strain>Tuc7</strain>
    </source>
</reference>
<gene>
    <name evidence="1" type="primary">rplR</name>
    <name type="ordered locus">BUAPTUC7_502</name>
</gene>